<sequence>MVKIGVLGLQGAVREHVKSVEASGAEAVVVKRIEQLEEIDGLILPGGESTTMRRLIDKYAFMEPLRTFAKSGKPMFGTCAGMILLAKTLIGYDEAHIGAMDITVERNAFGRQKDSFEAALSIKGVGEDFVGVFIRAPYVVNVADNVEVLSTHGDRMVAVRQGPFLAASFHPELTDDHRVTAYFVEMVKEAKMKKVV</sequence>
<proteinExistence type="inferred from homology"/>
<organism>
    <name type="scientific">Bacillus cereus (strain Q1)</name>
    <dbReference type="NCBI Taxonomy" id="361100"/>
    <lineage>
        <taxon>Bacteria</taxon>
        <taxon>Bacillati</taxon>
        <taxon>Bacillota</taxon>
        <taxon>Bacilli</taxon>
        <taxon>Bacillales</taxon>
        <taxon>Bacillaceae</taxon>
        <taxon>Bacillus</taxon>
        <taxon>Bacillus cereus group</taxon>
    </lineage>
</organism>
<name>PDXT_BACCQ</name>
<feature type="chain" id="PRO_1000185877" description="Pyridoxal 5'-phosphate synthase subunit PdxT">
    <location>
        <begin position="1"/>
        <end position="196"/>
    </location>
</feature>
<feature type="active site" description="Nucleophile" evidence="1">
    <location>
        <position position="79"/>
    </location>
</feature>
<feature type="active site" description="Charge relay system" evidence="1">
    <location>
        <position position="170"/>
    </location>
</feature>
<feature type="active site" description="Charge relay system" evidence="1">
    <location>
        <position position="172"/>
    </location>
</feature>
<feature type="binding site" evidence="1">
    <location>
        <begin position="47"/>
        <end position="49"/>
    </location>
    <ligand>
        <name>L-glutamine</name>
        <dbReference type="ChEBI" id="CHEBI:58359"/>
    </ligand>
</feature>
<feature type="binding site" evidence="1">
    <location>
        <position position="106"/>
    </location>
    <ligand>
        <name>L-glutamine</name>
        <dbReference type="ChEBI" id="CHEBI:58359"/>
    </ligand>
</feature>
<feature type="binding site" evidence="1">
    <location>
        <begin position="134"/>
        <end position="135"/>
    </location>
    <ligand>
        <name>L-glutamine</name>
        <dbReference type="ChEBI" id="CHEBI:58359"/>
    </ligand>
</feature>
<keyword id="KW-0315">Glutamine amidotransferase</keyword>
<keyword id="KW-0378">Hydrolase</keyword>
<keyword id="KW-0456">Lyase</keyword>
<keyword id="KW-0663">Pyridoxal phosphate</keyword>
<comment type="function">
    <text evidence="1">Catalyzes the hydrolysis of glutamine to glutamate and ammonia as part of the biosynthesis of pyridoxal 5'-phosphate. The resulting ammonia molecule is channeled to the active site of PdxS.</text>
</comment>
<comment type="catalytic activity">
    <reaction evidence="1">
        <text>aldehydo-D-ribose 5-phosphate + D-glyceraldehyde 3-phosphate + L-glutamine = pyridoxal 5'-phosphate + L-glutamate + phosphate + 3 H2O + H(+)</text>
        <dbReference type="Rhea" id="RHEA:31507"/>
        <dbReference type="ChEBI" id="CHEBI:15377"/>
        <dbReference type="ChEBI" id="CHEBI:15378"/>
        <dbReference type="ChEBI" id="CHEBI:29985"/>
        <dbReference type="ChEBI" id="CHEBI:43474"/>
        <dbReference type="ChEBI" id="CHEBI:58273"/>
        <dbReference type="ChEBI" id="CHEBI:58359"/>
        <dbReference type="ChEBI" id="CHEBI:59776"/>
        <dbReference type="ChEBI" id="CHEBI:597326"/>
        <dbReference type="EC" id="4.3.3.6"/>
    </reaction>
</comment>
<comment type="catalytic activity">
    <reaction evidence="1">
        <text>L-glutamine + H2O = L-glutamate + NH4(+)</text>
        <dbReference type="Rhea" id="RHEA:15889"/>
        <dbReference type="ChEBI" id="CHEBI:15377"/>
        <dbReference type="ChEBI" id="CHEBI:28938"/>
        <dbReference type="ChEBI" id="CHEBI:29985"/>
        <dbReference type="ChEBI" id="CHEBI:58359"/>
        <dbReference type="EC" id="3.5.1.2"/>
    </reaction>
</comment>
<comment type="pathway">
    <text evidence="1">Cofactor biosynthesis; pyridoxal 5'-phosphate biosynthesis.</text>
</comment>
<comment type="subunit">
    <text evidence="1">In the presence of PdxS, forms a dodecamer of heterodimers. Only shows activity in the heterodimer.</text>
</comment>
<comment type="similarity">
    <text evidence="1">Belongs to the glutaminase PdxT/SNO family.</text>
</comment>
<protein>
    <recommendedName>
        <fullName evidence="1">Pyridoxal 5'-phosphate synthase subunit PdxT</fullName>
        <ecNumber evidence="1">4.3.3.6</ecNumber>
    </recommendedName>
    <alternativeName>
        <fullName evidence="1">Pdx2</fullName>
    </alternativeName>
    <alternativeName>
        <fullName evidence="1">Pyridoxal 5'-phosphate synthase glutaminase subunit</fullName>
        <ecNumber evidence="1">3.5.1.2</ecNumber>
    </alternativeName>
</protein>
<gene>
    <name evidence="1" type="primary">pdxT</name>
    <name type="ordered locus">BCQ_0017</name>
</gene>
<reference key="1">
    <citation type="journal article" date="2009" name="J. Bacteriol.">
        <title>Complete genome sequence of the extremophilic Bacillus cereus strain Q1 with industrial applications.</title>
        <authorList>
            <person name="Xiong Z."/>
            <person name="Jiang Y."/>
            <person name="Qi D."/>
            <person name="Lu H."/>
            <person name="Yang F."/>
            <person name="Yang J."/>
            <person name="Chen L."/>
            <person name="Sun L."/>
            <person name="Xu X."/>
            <person name="Xue Y."/>
            <person name="Zhu Y."/>
            <person name="Jin Q."/>
        </authorList>
    </citation>
    <scope>NUCLEOTIDE SEQUENCE [LARGE SCALE GENOMIC DNA]</scope>
    <source>
        <strain>Q1</strain>
    </source>
</reference>
<evidence type="ECO:0000255" key="1">
    <source>
        <dbReference type="HAMAP-Rule" id="MF_01615"/>
    </source>
</evidence>
<dbReference type="EC" id="4.3.3.6" evidence="1"/>
<dbReference type="EC" id="3.5.1.2" evidence="1"/>
<dbReference type="EMBL" id="CP000227">
    <property type="protein sequence ID" value="ACM10541.1"/>
    <property type="molecule type" value="Genomic_DNA"/>
</dbReference>
<dbReference type="SMR" id="B9IYH9"/>
<dbReference type="MEROPS" id="C26.A32"/>
<dbReference type="KEGG" id="bcq:BCQ_0017"/>
<dbReference type="HOGENOM" id="CLU_069674_2_0_9"/>
<dbReference type="UniPathway" id="UPA00245"/>
<dbReference type="Proteomes" id="UP000000441">
    <property type="component" value="Chromosome"/>
</dbReference>
<dbReference type="GO" id="GO:0005829">
    <property type="term" value="C:cytosol"/>
    <property type="evidence" value="ECO:0007669"/>
    <property type="project" value="TreeGrafter"/>
</dbReference>
<dbReference type="GO" id="GO:1903600">
    <property type="term" value="C:glutaminase complex"/>
    <property type="evidence" value="ECO:0007669"/>
    <property type="project" value="TreeGrafter"/>
</dbReference>
<dbReference type="GO" id="GO:0004359">
    <property type="term" value="F:glutaminase activity"/>
    <property type="evidence" value="ECO:0007669"/>
    <property type="project" value="UniProtKB-UniRule"/>
</dbReference>
<dbReference type="GO" id="GO:0036381">
    <property type="term" value="F:pyridoxal 5'-phosphate synthase (glutamine hydrolysing) activity"/>
    <property type="evidence" value="ECO:0007669"/>
    <property type="project" value="UniProtKB-UniRule"/>
</dbReference>
<dbReference type="GO" id="GO:0006543">
    <property type="term" value="P:glutamine catabolic process"/>
    <property type="evidence" value="ECO:0007669"/>
    <property type="project" value="UniProtKB-UniRule"/>
</dbReference>
<dbReference type="GO" id="GO:0042823">
    <property type="term" value="P:pyridoxal phosphate biosynthetic process"/>
    <property type="evidence" value="ECO:0007669"/>
    <property type="project" value="UniProtKB-UniRule"/>
</dbReference>
<dbReference type="GO" id="GO:0008614">
    <property type="term" value="P:pyridoxine metabolic process"/>
    <property type="evidence" value="ECO:0007669"/>
    <property type="project" value="TreeGrafter"/>
</dbReference>
<dbReference type="CDD" id="cd01749">
    <property type="entry name" value="GATase1_PB"/>
    <property type="match status" value="1"/>
</dbReference>
<dbReference type="FunFam" id="3.40.50.880:FF:000010">
    <property type="entry name" value="uncharacterized protein LOC100176842 isoform X2"/>
    <property type="match status" value="1"/>
</dbReference>
<dbReference type="Gene3D" id="3.40.50.880">
    <property type="match status" value="1"/>
</dbReference>
<dbReference type="HAMAP" id="MF_01615">
    <property type="entry name" value="PdxT"/>
    <property type="match status" value="1"/>
</dbReference>
<dbReference type="InterPro" id="IPR029062">
    <property type="entry name" value="Class_I_gatase-like"/>
</dbReference>
<dbReference type="InterPro" id="IPR002161">
    <property type="entry name" value="PdxT/SNO"/>
</dbReference>
<dbReference type="InterPro" id="IPR021196">
    <property type="entry name" value="PdxT/SNO_CS"/>
</dbReference>
<dbReference type="NCBIfam" id="TIGR03800">
    <property type="entry name" value="PLP_synth_Pdx2"/>
    <property type="match status" value="1"/>
</dbReference>
<dbReference type="PANTHER" id="PTHR31559">
    <property type="entry name" value="PYRIDOXAL 5'-PHOSPHATE SYNTHASE SUBUNIT SNO"/>
    <property type="match status" value="1"/>
</dbReference>
<dbReference type="PANTHER" id="PTHR31559:SF0">
    <property type="entry name" value="PYRIDOXAL 5'-PHOSPHATE SYNTHASE SUBUNIT SNO1-RELATED"/>
    <property type="match status" value="1"/>
</dbReference>
<dbReference type="Pfam" id="PF01174">
    <property type="entry name" value="SNO"/>
    <property type="match status" value="1"/>
</dbReference>
<dbReference type="PIRSF" id="PIRSF005639">
    <property type="entry name" value="Glut_amidoT_SNO"/>
    <property type="match status" value="1"/>
</dbReference>
<dbReference type="SUPFAM" id="SSF52317">
    <property type="entry name" value="Class I glutamine amidotransferase-like"/>
    <property type="match status" value="1"/>
</dbReference>
<dbReference type="PROSITE" id="PS01236">
    <property type="entry name" value="PDXT_SNO_1"/>
    <property type="match status" value="1"/>
</dbReference>
<dbReference type="PROSITE" id="PS51130">
    <property type="entry name" value="PDXT_SNO_2"/>
    <property type="match status" value="1"/>
</dbReference>
<accession>B9IYH9</accession>